<reference key="1">
    <citation type="journal article" date="1975" name="Hoppe-Seyler's Z. Physiol. Chem.">
        <title>The amino acid sequence of toxin V II 2, a cytotoxin homologue from banded Egyptian cobra (Naja haje annulifera) venom.</title>
        <authorList>
            <person name="Joubert F.J."/>
        </authorList>
    </citation>
    <scope>PROTEIN SEQUENCE</scope>
    <scope>TOXIC DOSE</scope>
    <scope>SUBCELLULAR LOCATION</scope>
    <source>
        <tissue>Venom</tissue>
    </source>
</reference>
<keyword id="KW-0123">Cardiotoxin</keyword>
<keyword id="KW-0204">Cytolysis</keyword>
<keyword id="KW-0903">Direct protein sequencing</keyword>
<keyword id="KW-1015">Disulfide bond</keyword>
<keyword id="KW-0472">Membrane</keyword>
<keyword id="KW-0964">Secreted</keyword>
<keyword id="KW-1052">Target cell membrane</keyword>
<keyword id="KW-1053">Target membrane</keyword>
<keyword id="KW-0800">Toxin</keyword>
<sequence>LKCHKLVPPFWKTCPEGKNLCYKMYMVATPMLPVKRGCIDVCPKDSALVKYMCCNTDKCN</sequence>
<name>3SA2_NAJHA</name>
<comment type="function">
    <text evidence="1 2">Shows cytolytic activity on many different cells by forming pore in lipid membranes. In vivo, increases heart rate or kills the animal by cardiac arrest. In addition, it binds to heparin with high affinity, interacts with Kv channel-interacting protein 1 (KCNIP1) in a calcium-independent manner, and binds to integrin alpha-V/beta-3 (ITGAV/ITGB3) with moderate affinity.</text>
</comment>
<comment type="subunit">
    <text evidence="1">Monomer in solution; Homodimer and oligomer in the presence of negatively charged lipids forming a pore with a size ranging between 20 and 30 Angstroms.</text>
</comment>
<comment type="subcellular location">
    <subcellularLocation>
        <location evidence="3">Secreted</location>
    </subcellularLocation>
    <subcellularLocation>
        <location evidence="1">Target cell membrane</location>
    </subcellularLocation>
</comment>
<comment type="tissue specificity">
    <text evidence="4">Expressed by the venom gland.</text>
</comment>
<comment type="toxic dose">
    <text evidence="3">LD(50) is 1.98 mg/kg by intravenous injection.</text>
</comment>
<comment type="miscellaneous">
    <text>The sequence of the major component is shown, it is called toxin V(II)2 and the minor component is called toxin V(II)2A.</text>
</comment>
<comment type="miscellaneous">
    <text evidence="4">Is classified as a P-type cytotoxin, since a proline residue stands at position 30 (Pro-31 in standard classification).</text>
</comment>
<comment type="similarity">
    <text evidence="4">Belongs to the three-finger toxin family. Short-chain subfamily. Type IA cytotoxin sub-subfamily.</text>
</comment>
<evidence type="ECO:0000250" key="1">
    <source>
        <dbReference type="UniProtKB" id="P60301"/>
    </source>
</evidence>
<evidence type="ECO:0000250" key="2">
    <source>
        <dbReference type="UniProtKB" id="P60304"/>
    </source>
</evidence>
<evidence type="ECO:0000269" key="3">
    <source>
    </source>
</evidence>
<evidence type="ECO:0000305" key="4"/>
<organism>
    <name type="scientific">Naja annulifera</name>
    <name type="common">Banded Egyptian cobra</name>
    <name type="synonym">Naja haje annulifera</name>
    <dbReference type="NCBI Taxonomy" id="96794"/>
    <lineage>
        <taxon>Eukaryota</taxon>
        <taxon>Metazoa</taxon>
        <taxon>Chordata</taxon>
        <taxon>Craniata</taxon>
        <taxon>Vertebrata</taxon>
        <taxon>Euteleostomi</taxon>
        <taxon>Lepidosauria</taxon>
        <taxon>Squamata</taxon>
        <taxon>Bifurcata</taxon>
        <taxon>Unidentata</taxon>
        <taxon>Episquamata</taxon>
        <taxon>Toxicofera</taxon>
        <taxon>Serpentes</taxon>
        <taxon>Colubroidea</taxon>
        <taxon>Elapidae</taxon>
        <taxon>Elapinae</taxon>
        <taxon>Naja</taxon>
    </lineage>
</organism>
<dbReference type="PIR" id="A01725">
    <property type="entry name" value="H3NJ2E"/>
</dbReference>
<dbReference type="SMR" id="P01462"/>
<dbReference type="GO" id="GO:0005576">
    <property type="term" value="C:extracellular region"/>
    <property type="evidence" value="ECO:0007669"/>
    <property type="project" value="UniProtKB-SubCell"/>
</dbReference>
<dbReference type="GO" id="GO:0016020">
    <property type="term" value="C:membrane"/>
    <property type="evidence" value="ECO:0007669"/>
    <property type="project" value="UniProtKB-KW"/>
</dbReference>
<dbReference type="GO" id="GO:0044218">
    <property type="term" value="C:other organism cell membrane"/>
    <property type="evidence" value="ECO:0007669"/>
    <property type="project" value="UniProtKB-KW"/>
</dbReference>
<dbReference type="GO" id="GO:0090729">
    <property type="term" value="F:toxin activity"/>
    <property type="evidence" value="ECO:0007669"/>
    <property type="project" value="UniProtKB-KW"/>
</dbReference>
<dbReference type="GO" id="GO:0031640">
    <property type="term" value="P:killing of cells of another organism"/>
    <property type="evidence" value="ECO:0007669"/>
    <property type="project" value="UniProtKB-KW"/>
</dbReference>
<dbReference type="CDD" id="cd00206">
    <property type="entry name" value="TFP_snake_toxin"/>
    <property type="match status" value="1"/>
</dbReference>
<dbReference type="FunFam" id="2.10.60.10:FF:000024">
    <property type="entry name" value="Cytotoxin 1"/>
    <property type="match status" value="1"/>
</dbReference>
<dbReference type="Gene3D" id="2.10.60.10">
    <property type="entry name" value="CD59"/>
    <property type="match status" value="1"/>
</dbReference>
<dbReference type="InterPro" id="IPR003572">
    <property type="entry name" value="Cytotoxin_Cobra"/>
</dbReference>
<dbReference type="InterPro" id="IPR003571">
    <property type="entry name" value="Snake_3FTx"/>
</dbReference>
<dbReference type="InterPro" id="IPR045860">
    <property type="entry name" value="Snake_toxin-like_sf"/>
</dbReference>
<dbReference type="InterPro" id="IPR018354">
    <property type="entry name" value="Snake_toxin_con_site"/>
</dbReference>
<dbReference type="InterPro" id="IPR054131">
    <property type="entry name" value="Toxin_cobra-type"/>
</dbReference>
<dbReference type="Pfam" id="PF21947">
    <property type="entry name" value="Toxin_cobra-type"/>
    <property type="match status" value="1"/>
</dbReference>
<dbReference type="PRINTS" id="PR00282">
    <property type="entry name" value="CYTOTOXIN"/>
</dbReference>
<dbReference type="SUPFAM" id="SSF57302">
    <property type="entry name" value="Snake toxin-like"/>
    <property type="match status" value="1"/>
</dbReference>
<dbReference type="PROSITE" id="PS00272">
    <property type="entry name" value="SNAKE_TOXIN"/>
    <property type="match status" value="1"/>
</dbReference>
<proteinExistence type="evidence at protein level"/>
<protein>
    <recommendedName>
        <fullName>Cytotoxin 2</fullName>
    </recommendedName>
    <alternativeName>
        <fullName>Toxin V(II)2/V(II)2A</fullName>
    </alternativeName>
</protein>
<accession>P01462</accession>
<feature type="chain" id="PRO_0000093486" description="Cytotoxin 2" evidence="3">
    <location>
        <begin position="1"/>
        <end position="60"/>
    </location>
</feature>
<feature type="disulfide bond" evidence="1">
    <location>
        <begin position="3"/>
        <end position="21"/>
    </location>
</feature>
<feature type="disulfide bond" evidence="1">
    <location>
        <begin position="14"/>
        <end position="38"/>
    </location>
</feature>
<feature type="disulfide bond" evidence="1">
    <location>
        <begin position="42"/>
        <end position="53"/>
    </location>
</feature>
<feature type="disulfide bond" evidence="1">
    <location>
        <begin position="54"/>
        <end position="59"/>
    </location>
</feature>
<feature type="sequence variant" description="In toxin V(II)2A.">
    <original>M</original>
    <variation>V</variation>
    <location>
        <position position="52"/>
    </location>
</feature>
<feature type="sequence variant" description="In toxin V(II)2A.">
    <original>N</original>
    <variation>S</variation>
    <location>
        <position position="55"/>
    </location>
</feature>